<evidence type="ECO:0000255" key="1">
    <source>
        <dbReference type="HAMAP-Rule" id="MF_00014"/>
    </source>
</evidence>
<feature type="chain" id="PRO_0000244129" description="Ribosome maturation factor RimM">
    <location>
        <begin position="1"/>
        <end position="172"/>
    </location>
</feature>
<feature type="domain" description="PRC barrel" evidence="1">
    <location>
        <begin position="92"/>
        <end position="167"/>
    </location>
</feature>
<keyword id="KW-0143">Chaperone</keyword>
<keyword id="KW-0963">Cytoplasm</keyword>
<keyword id="KW-0690">Ribosome biogenesis</keyword>
<keyword id="KW-0698">rRNA processing</keyword>
<dbReference type="EMBL" id="CR925677">
    <property type="protein sequence ID" value="CAI28379.1"/>
    <property type="molecule type" value="Genomic_DNA"/>
</dbReference>
<dbReference type="RefSeq" id="WP_011155563.1">
    <property type="nucleotide sequence ID" value="NC_006831.1"/>
</dbReference>
<dbReference type="SMR" id="Q5FGP6"/>
<dbReference type="GeneID" id="33058037"/>
<dbReference type="KEGG" id="erg:ERGA_CDS_09270"/>
<dbReference type="HOGENOM" id="CLU_077636_0_1_5"/>
<dbReference type="OrthoDB" id="9788191at2"/>
<dbReference type="Proteomes" id="UP000000533">
    <property type="component" value="Chromosome"/>
</dbReference>
<dbReference type="GO" id="GO:0005737">
    <property type="term" value="C:cytoplasm"/>
    <property type="evidence" value="ECO:0007669"/>
    <property type="project" value="UniProtKB-SubCell"/>
</dbReference>
<dbReference type="GO" id="GO:0005840">
    <property type="term" value="C:ribosome"/>
    <property type="evidence" value="ECO:0007669"/>
    <property type="project" value="InterPro"/>
</dbReference>
<dbReference type="GO" id="GO:0043022">
    <property type="term" value="F:ribosome binding"/>
    <property type="evidence" value="ECO:0007669"/>
    <property type="project" value="InterPro"/>
</dbReference>
<dbReference type="GO" id="GO:0042274">
    <property type="term" value="P:ribosomal small subunit biogenesis"/>
    <property type="evidence" value="ECO:0007669"/>
    <property type="project" value="UniProtKB-UniRule"/>
</dbReference>
<dbReference type="GO" id="GO:0006364">
    <property type="term" value="P:rRNA processing"/>
    <property type="evidence" value="ECO:0007669"/>
    <property type="project" value="UniProtKB-UniRule"/>
</dbReference>
<dbReference type="Gene3D" id="2.30.30.240">
    <property type="entry name" value="PRC-barrel domain"/>
    <property type="match status" value="1"/>
</dbReference>
<dbReference type="Gene3D" id="2.40.30.60">
    <property type="entry name" value="RimM"/>
    <property type="match status" value="1"/>
</dbReference>
<dbReference type="HAMAP" id="MF_00014">
    <property type="entry name" value="Ribosome_mat_RimM"/>
    <property type="match status" value="1"/>
</dbReference>
<dbReference type="InterPro" id="IPR011033">
    <property type="entry name" value="PRC_barrel-like_sf"/>
</dbReference>
<dbReference type="InterPro" id="IPR056792">
    <property type="entry name" value="PRC_RimM"/>
</dbReference>
<dbReference type="InterPro" id="IPR011961">
    <property type="entry name" value="RimM"/>
</dbReference>
<dbReference type="InterPro" id="IPR002676">
    <property type="entry name" value="RimM_N"/>
</dbReference>
<dbReference type="InterPro" id="IPR036976">
    <property type="entry name" value="RimM_N_sf"/>
</dbReference>
<dbReference type="InterPro" id="IPR009000">
    <property type="entry name" value="Transl_B-barrel_sf"/>
</dbReference>
<dbReference type="NCBIfam" id="TIGR02273">
    <property type="entry name" value="16S_RimM"/>
    <property type="match status" value="1"/>
</dbReference>
<dbReference type="NCBIfam" id="NF011186">
    <property type="entry name" value="PRK14592.1"/>
    <property type="match status" value="1"/>
</dbReference>
<dbReference type="PANTHER" id="PTHR33692">
    <property type="entry name" value="RIBOSOME MATURATION FACTOR RIMM"/>
    <property type="match status" value="1"/>
</dbReference>
<dbReference type="PANTHER" id="PTHR33692:SF1">
    <property type="entry name" value="RIBOSOME MATURATION FACTOR RIMM"/>
    <property type="match status" value="1"/>
</dbReference>
<dbReference type="Pfam" id="PF24986">
    <property type="entry name" value="PRC_RimM"/>
    <property type="match status" value="1"/>
</dbReference>
<dbReference type="Pfam" id="PF01782">
    <property type="entry name" value="RimM"/>
    <property type="match status" value="1"/>
</dbReference>
<dbReference type="SUPFAM" id="SSF50346">
    <property type="entry name" value="PRC-barrel domain"/>
    <property type="match status" value="1"/>
</dbReference>
<dbReference type="SUPFAM" id="SSF50447">
    <property type="entry name" value="Translation proteins"/>
    <property type="match status" value="1"/>
</dbReference>
<name>RIMM_EHRRG</name>
<proteinExistence type="inferred from homology"/>
<organism>
    <name type="scientific">Ehrlichia ruminantium (strain Gardel)</name>
    <dbReference type="NCBI Taxonomy" id="302409"/>
    <lineage>
        <taxon>Bacteria</taxon>
        <taxon>Pseudomonadati</taxon>
        <taxon>Pseudomonadota</taxon>
        <taxon>Alphaproteobacteria</taxon>
        <taxon>Rickettsiales</taxon>
        <taxon>Anaplasmataceae</taxon>
        <taxon>Ehrlichia</taxon>
    </lineage>
</organism>
<gene>
    <name evidence="1" type="primary">rimM</name>
    <name type="ordered locus">ERGA_CDS_09270</name>
</gene>
<sequence length="172" mass="19513">MNSDFICLGIITSPHGIKGHVKIKTFTENPQNFTSYGKLTDGITTYEINIIQVVSKNTIIAKINNITSRTNAELLRNKKLFIEKTKLPNLIENEFYHSDLVGLQVILEDNNIFGTIKKIYNFGSCDIIEILLYNSKKSTMLPFSKDIFTHINTKERYVILKLPEIIGSNSGI</sequence>
<accession>Q5FGP6</accession>
<reference key="1">
    <citation type="journal article" date="2006" name="J. Bacteriol.">
        <title>Comparative genomic analysis of three strains of Ehrlichia ruminantium reveals an active process of genome size plasticity.</title>
        <authorList>
            <person name="Frutos R."/>
            <person name="Viari A."/>
            <person name="Ferraz C."/>
            <person name="Morgat A."/>
            <person name="Eychenie S."/>
            <person name="Kandassamy Y."/>
            <person name="Chantal I."/>
            <person name="Bensaid A."/>
            <person name="Coissac E."/>
            <person name="Vachiery N."/>
            <person name="Demaille J."/>
            <person name="Martinez D."/>
        </authorList>
    </citation>
    <scope>NUCLEOTIDE SEQUENCE [LARGE SCALE GENOMIC DNA]</scope>
    <source>
        <strain>Gardel</strain>
    </source>
</reference>
<comment type="function">
    <text evidence="1">An accessory protein needed during the final step in the assembly of 30S ribosomal subunit, possibly for assembly of the head region. Essential for efficient processing of 16S rRNA. May be needed both before and after RbfA during the maturation of 16S rRNA. It has affinity for free ribosomal 30S subunits but not for 70S ribosomes.</text>
</comment>
<comment type="subunit">
    <text evidence="1">Binds ribosomal protein uS19.</text>
</comment>
<comment type="subcellular location">
    <subcellularLocation>
        <location evidence="1">Cytoplasm</location>
    </subcellularLocation>
</comment>
<comment type="domain">
    <text evidence="1">The PRC barrel domain binds ribosomal protein uS19.</text>
</comment>
<comment type="similarity">
    <text evidence="1">Belongs to the RimM family.</text>
</comment>
<protein>
    <recommendedName>
        <fullName evidence="1">Ribosome maturation factor RimM</fullName>
    </recommendedName>
</protein>